<name>RL7_PEDPA</name>
<organism>
    <name type="scientific">Pediococcus pentosaceus (strain ATCC 25745 / CCUG 21536 / LMG 10740 / 183-1w)</name>
    <dbReference type="NCBI Taxonomy" id="278197"/>
    <lineage>
        <taxon>Bacteria</taxon>
        <taxon>Bacillati</taxon>
        <taxon>Bacillota</taxon>
        <taxon>Bacilli</taxon>
        <taxon>Lactobacillales</taxon>
        <taxon>Lactobacillaceae</taxon>
        <taxon>Pediococcus</taxon>
    </lineage>
</organism>
<reference key="1">
    <citation type="journal article" date="2006" name="Proc. Natl. Acad. Sci. U.S.A.">
        <title>Comparative genomics of the lactic acid bacteria.</title>
        <authorList>
            <person name="Makarova K.S."/>
            <person name="Slesarev A."/>
            <person name="Wolf Y.I."/>
            <person name="Sorokin A."/>
            <person name="Mirkin B."/>
            <person name="Koonin E.V."/>
            <person name="Pavlov A."/>
            <person name="Pavlova N."/>
            <person name="Karamychev V."/>
            <person name="Polouchine N."/>
            <person name="Shakhova V."/>
            <person name="Grigoriev I."/>
            <person name="Lou Y."/>
            <person name="Rohksar D."/>
            <person name="Lucas S."/>
            <person name="Huang K."/>
            <person name="Goodstein D.M."/>
            <person name="Hawkins T."/>
            <person name="Plengvidhya V."/>
            <person name="Welker D."/>
            <person name="Hughes J."/>
            <person name="Goh Y."/>
            <person name="Benson A."/>
            <person name="Baldwin K."/>
            <person name="Lee J.-H."/>
            <person name="Diaz-Muniz I."/>
            <person name="Dosti B."/>
            <person name="Smeianov V."/>
            <person name="Wechter W."/>
            <person name="Barabote R."/>
            <person name="Lorca G."/>
            <person name="Altermann E."/>
            <person name="Barrangou R."/>
            <person name="Ganesan B."/>
            <person name="Xie Y."/>
            <person name="Rawsthorne H."/>
            <person name="Tamir D."/>
            <person name="Parker C."/>
            <person name="Breidt F."/>
            <person name="Broadbent J.R."/>
            <person name="Hutkins R."/>
            <person name="O'Sullivan D."/>
            <person name="Steele J."/>
            <person name="Unlu G."/>
            <person name="Saier M.H. Jr."/>
            <person name="Klaenhammer T."/>
            <person name="Richardson P."/>
            <person name="Kozyavkin S."/>
            <person name="Weimer B.C."/>
            <person name="Mills D.A."/>
        </authorList>
    </citation>
    <scope>NUCLEOTIDE SEQUENCE [LARGE SCALE GENOMIC DNA]</scope>
    <source>
        <strain>ATCC 25745 / CCUG 21536 / LMG 10740 / 183-1w</strain>
    </source>
</reference>
<sequence length="121" mass="12376">MALDKDQFIEDLKGASITDLNDLVKAIEDEFGVSAAAPVAAAGAAGGAAEAKTSFNVELTSGGSAKIKVIKAVREITGAGLKDAKDMVDNAPSVIKEDVSEDEANELKAKLEEAGATVEVK</sequence>
<protein>
    <recommendedName>
        <fullName evidence="1">Large ribosomal subunit protein bL12</fullName>
    </recommendedName>
    <alternativeName>
        <fullName evidence="2">50S ribosomal protein L7/L12</fullName>
    </alternativeName>
</protein>
<evidence type="ECO:0000255" key="1">
    <source>
        <dbReference type="HAMAP-Rule" id="MF_00368"/>
    </source>
</evidence>
<evidence type="ECO:0000305" key="2"/>
<feature type="chain" id="PRO_1000007052" description="Large ribosomal subunit protein bL12">
    <location>
        <begin position="1"/>
        <end position="121"/>
    </location>
</feature>
<comment type="function">
    <text evidence="1">Forms part of the ribosomal stalk which helps the ribosome interact with GTP-bound translation factors. Is thus essential for accurate translation.</text>
</comment>
<comment type="subunit">
    <text evidence="1">Homodimer. Part of the ribosomal stalk of the 50S ribosomal subunit. Forms a multimeric L10(L12)X complex, where L10 forms an elongated spine to which 2 to 4 L12 dimers bind in a sequential fashion. Binds GTP-bound translation factors.</text>
</comment>
<comment type="similarity">
    <text evidence="1">Belongs to the bacterial ribosomal protein bL12 family.</text>
</comment>
<dbReference type="EMBL" id="CP000422">
    <property type="protein sequence ID" value="ABJ68521.1"/>
    <property type="molecule type" value="Genomic_DNA"/>
</dbReference>
<dbReference type="RefSeq" id="WP_002833260.1">
    <property type="nucleotide sequence ID" value="NC_008525.1"/>
</dbReference>
<dbReference type="SMR" id="Q03E51"/>
<dbReference type="STRING" id="278197.PEPE_1490"/>
<dbReference type="GeneID" id="33062888"/>
<dbReference type="KEGG" id="ppe:PEPE_1490"/>
<dbReference type="eggNOG" id="COG0222">
    <property type="taxonomic scope" value="Bacteria"/>
</dbReference>
<dbReference type="HOGENOM" id="CLU_086499_3_2_9"/>
<dbReference type="OrthoDB" id="9811748at2"/>
<dbReference type="Proteomes" id="UP000000773">
    <property type="component" value="Chromosome"/>
</dbReference>
<dbReference type="GO" id="GO:0022625">
    <property type="term" value="C:cytosolic large ribosomal subunit"/>
    <property type="evidence" value="ECO:0007669"/>
    <property type="project" value="TreeGrafter"/>
</dbReference>
<dbReference type="GO" id="GO:0003729">
    <property type="term" value="F:mRNA binding"/>
    <property type="evidence" value="ECO:0007669"/>
    <property type="project" value="TreeGrafter"/>
</dbReference>
<dbReference type="GO" id="GO:0003735">
    <property type="term" value="F:structural constituent of ribosome"/>
    <property type="evidence" value="ECO:0007669"/>
    <property type="project" value="InterPro"/>
</dbReference>
<dbReference type="GO" id="GO:0006412">
    <property type="term" value="P:translation"/>
    <property type="evidence" value="ECO:0007669"/>
    <property type="project" value="UniProtKB-UniRule"/>
</dbReference>
<dbReference type="CDD" id="cd00387">
    <property type="entry name" value="Ribosomal_L7_L12"/>
    <property type="match status" value="1"/>
</dbReference>
<dbReference type="FunFam" id="3.30.1390.10:FF:000001">
    <property type="entry name" value="50S ribosomal protein L7/L12"/>
    <property type="match status" value="1"/>
</dbReference>
<dbReference type="Gene3D" id="3.30.1390.10">
    <property type="match status" value="1"/>
</dbReference>
<dbReference type="Gene3D" id="1.20.5.710">
    <property type="entry name" value="Single helix bin"/>
    <property type="match status" value="1"/>
</dbReference>
<dbReference type="HAMAP" id="MF_00368">
    <property type="entry name" value="Ribosomal_bL12"/>
    <property type="match status" value="1"/>
</dbReference>
<dbReference type="InterPro" id="IPR000206">
    <property type="entry name" value="Ribosomal_bL12"/>
</dbReference>
<dbReference type="InterPro" id="IPR013823">
    <property type="entry name" value="Ribosomal_bL12_C"/>
</dbReference>
<dbReference type="InterPro" id="IPR014719">
    <property type="entry name" value="Ribosomal_bL12_C/ClpS-like"/>
</dbReference>
<dbReference type="InterPro" id="IPR008932">
    <property type="entry name" value="Ribosomal_bL12_oligo"/>
</dbReference>
<dbReference type="InterPro" id="IPR036235">
    <property type="entry name" value="Ribosomal_bL12_oligo_N_sf"/>
</dbReference>
<dbReference type="NCBIfam" id="TIGR00855">
    <property type="entry name" value="L12"/>
    <property type="match status" value="1"/>
</dbReference>
<dbReference type="PANTHER" id="PTHR45987">
    <property type="entry name" value="39S RIBOSOMAL PROTEIN L12"/>
    <property type="match status" value="1"/>
</dbReference>
<dbReference type="PANTHER" id="PTHR45987:SF4">
    <property type="entry name" value="LARGE RIBOSOMAL SUBUNIT PROTEIN BL12M"/>
    <property type="match status" value="1"/>
</dbReference>
<dbReference type="Pfam" id="PF00542">
    <property type="entry name" value="Ribosomal_L12"/>
    <property type="match status" value="1"/>
</dbReference>
<dbReference type="Pfam" id="PF16320">
    <property type="entry name" value="Ribosomal_L12_N"/>
    <property type="match status" value="1"/>
</dbReference>
<dbReference type="SUPFAM" id="SSF54736">
    <property type="entry name" value="ClpS-like"/>
    <property type="match status" value="1"/>
</dbReference>
<dbReference type="SUPFAM" id="SSF48300">
    <property type="entry name" value="Ribosomal protein L7/12, oligomerisation (N-terminal) domain"/>
    <property type="match status" value="1"/>
</dbReference>
<keyword id="KW-0687">Ribonucleoprotein</keyword>
<keyword id="KW-0689">Ribosomal protein</keyword>
<gene>
    <name evidence="1" type="primary">rplL</name>
    <name type="ordered locus">PEPE_1490</name>
</gene>
<accession>Q03E51</accession>
<proteinExistence type="inferred from homology"/>